<protein>
    <recommendedName>
        <fullName>Cytochrome b</fullName>
    </recommendedName>
    <alternativeName>
        <fullName>Complex III subunit 3</fullName>
    </alternativeName>
    <alternativeName>
        <fullName>Complex III subunit III</fullName>
    </alternativeName>
    <alternativeName>
        <fullName>Cytochrome b-c1 complex subunit 3</fullName>
    </alternativeName>
    <alternativeName>
        <fullName>Ubiquinol-cytochrome-c reductase complex cytochrome b subunit</fullName>
    </alternativeName>
</protein>
<name>CYB_NATMJ</name>
<sequence length="379" mass="42757">MTNIRKSHPLTKIINSSFIDLPTPSSISSWWNFGSLLGICLAVQILTGLFLAMHYTADTSTAFNSVTHICRDVNYGWVLRYMHANGASMFFICLYLHVGRGLYYGSYTYTETWNVGIMLLFAVMATAFMGYVLPWGQMSFWGATVITNLLSAIPYIGTNLVEWIWGGFSVDKATLTRFFAFHFILPFIISAMVMVHLLFLHETGSNNPTGIPSNMDMIPFHPYHTIKDILGLLLMLTALLVLVMFSPDLLGDPDNYTPANPLNTPPHIKPEWYFLFAYAILRSIPNKLGGVLALILSILILAIIPLLHTSKQRSMMFRPISQCMFWLLVADMLTLTWIGGQPVEHPYIIIGQLASILYFSIILIFMPLASLTENHLLKW</sequence>
<evidence type="ECO:0000250" key="1"/>
<evidence type="ECO:0000250" key="2">
    <source>
        <dbReference type="UniProtKB" id="P00157"/>
    </source>
</evidence>
<evidence type="ECO:0000255" key="3">
    <source>
        <dbReference type="PROSITE-ProRule" id="PRU00967"/>
    </source>
</evidence>
<evidence type="ECO:0000255" key="4">
    <source>
        <dbReference type="PROSITE-ProRule" id="PRU00968"/>
    </source>
</evidence>
<geneLocation type="mitochondrion"/>
<accession>Q4VUU2</accession>
<dbReference type="EMBL" id="AY621021">
    <property type="protein sequence ID" value="AAU04744.1"/>
    <property type="molecule type" value="Genomic_DNA"/>
</dbReference>
<dbReference type="EMBL" id="AY621020">
    <property type="protein sequence ID" value="AAU04743.1"/>
    <property type="molecule type" value="Genomic_DNA"/>
</dbReference>
<dbReference type="SMR" id="Q4VUU2"/>
<dbReference type="GO" id="GO:0005743">
    <property type="term" value="C:mitochondrial inner membrane"/>
    <property type="evidence" value="ECO:0007669"/>
    <property type="project" value="UniProtKB-SubCell"/>
</dbReference>
<dbReference type="GO" id="GO:0045275">
    <property type="term" value="C:respiratory chain complex III"/>
    <property type="evidence" value="ECO:0007669"/>
    <property type="project" value="InterPro"/>
</dbReference>
<dbReference type="GO" id="GO:0046872">
    <property type="term" value="F:metal ion binding"/>
    <property type="evidence" value="ECO:0007669"/>
    <property type="project" value="UniProtKB-KW"/>
</dbReference>
<dbReference type="GO" id="GO:0008121">
    <property type="term" value="F:ubiquinol-cytochrome-c reductase activity"/>
    <property type="evidence" value="ECO:0007669"/>
    <property type="project" value="InterPro"/>
</dbReference>
<dbReference type="GO" id="GO:0006122">
    <property type="term" value="P:mitochondrial electron transport, ubiquinol to cytochrome c"/>
    <property type="evidence" value="ECO:0007669"/>
    <property type="project" value="TreeGrafter"/>
</dbReference>
<dbReference type="CDD" id="cd00290">
    <property type="entry name" value="cytochrome_b_C"/>
    <property type="match status" value="1"/>
</dbReference>
<dbReference type="CDD" id="cd00284">
    <property type="entry name" value="Cytochrome_b_N"/>
    <property type="match status" value="1"/>
</dbReference>
<dbReference type="FunFam" id="1.20.810.10:FF:000002">
    <property type="entry name" value="Cytochrome b"/>
    <property type="match status" value="1"/>
</dbReference>
<dbReference type="Gene3D" id="1.20.810.10">
    <property type="entry name" value="Cytochrome Bc1 Complex, Chain C"/>
    <property type="match status" value="1"/>
</dbReference>
<dbReference type="InterPro" id="IPR005798">
    <property type="entry name" value="Cyt_b/b6_C"/>
</dbReference>
<dbReference type="InterPro" id="IPR036150">
    <property type="entry name" value="Cyt_b/b6_C_sf"/>
</dbReference>
<dbReference type="InterPro" id="IPR005797">
    <property type="entry name" value="Cyt_b/b6_N"/>
</dbReference>
<dbReference type="InterPro" id="IPR027387">
    <property type="entry name" value="Cytb/b6-like_sf"/>
</dbReference>
<dbReference type="InterPro" id="IPR030689">
    <property type="entry name" value="Cytochrome_b"/>
</dbReference>
<dbReference type="InterPro" id="IPR048260">
    <property type="entry name" value="Cytochrome_b_C_euk/bac"/>
</dbReference>
<dbReference type="InterPro" id="IPR048259">
    <property type="entry name" value="Cytochrome_b_N_euk/bac"/>
</dbReference>
<dbReference type="InterPro" id="IPR016174">
    <property type="entry name" value="Di-haem_cyt_TM"/>
</dbReference>
<dbReference type="PANTHER" id="PTHR19271">
    <property type="entry name" value="CYTOCHROME B"/>
    <property type="match status" value="1"/>
</dbReference>
<dbReference type="PANTHER" id="PTHR19271:SF16">
    <property type="entry name" value="CYTOCHROME B"/>
    <property type="match status" value="1"/>
</dbReference>
<dbReference type="Pfam" id="PF00032">
    <property type="entry name" value="Cytochrom_B_C"/>
    <property type="match status" value="1"/>
</dbReference>
<dbReference type="Pfam" id="PF00033">
    <property type="entry name" value="Cytochrome_B"/>
    <property type="match status" value="1"/>
</dbReference>
<dbReference type="PIRSF" id="PIRSF038885">
    <property type="entry name" value="COB"/>
    <property type="match status" value="1"/>
</dbReference>
<dbReference type="SUPFAM" id="SSF81648">
    <property type="entry name" value="a domain/subunit of cytochrome bc1 complex (Ubiquinol-cytochrome c reductase)"/>
    <property type="match status" value="1"/>
</dbReference>
<dbReference type="SUPFAM" id="SSF81342">
    <property type="entry name" value="Transmembrane di-heme cytochromes"/>
    <property type="match status" value="1"/>
</dbReference>
<dbReference type="PROSITE" id="PS51003">
    <property type="entry name" value="CYTB_CTER"/>
    <property type="match status" value="1"/>
</dbReference>
<dbReference type="PROSITE" id="PS51002">
    <property type="entry name" value="CYTB_NTER"/>
    <property type="match status" value="1"/>
</dbReference>
<comment type="function">
    <text evidence="2">Component of the ubiquinol-cytochrome c reductase complex (complex III or cytochrome b-c1 complex) that is part of the mitochondrial respiratory chain. The b-c1 complex mediates electron transfer from ubiquinol to cytochrome c. Contributes to the generation of a proton gradient across the mitochondrial membrane that is then used for ATP synthesis.</text>
</comment>
<comment type="cofactor">
    <cofactor evidence="2">
        <name>heme b</name>
        <dbReference type="ChEBI" id="CHEBI:60344"/>
    </cofactor>
    <text evidence="2">Binds 2 heme b groups non-covalently.</text>
</comment>
<comment type="subunit">
    <text evidence="2">The cytochrome bc1 complex contains 11 subunits: 3 respiratory subunits (MT-CYB, CYC1 and UQCRFS1), 2 core proteins (UQCRC1 and UQCRC2) and 6 low-molecular weight proteins (UQCRH/QCR6, UQCRB/QCR7, UQCRQ/QCR8, UQCR10/QCR9, UQCR11/QCR10 and a cleavage product of UQCRFS1). This cytochrome bc1 complex then forms a dimer.</text>
</comment>
<comment type="subcellular location">
    <subcellularLocation>
        <location evidence="2">Mitochondrion inner membrane</location>
        <topology evidence="2">Multi-pass membrane protein</topology>
    </subcellularLocation>
</comment>
<comment type="miscellaneous">
    <text evidence="1">Heme 1 (or BL or b562) is low-potential and absorbs at about 562 nm, and heme 2 (or BH or b566) is high-potential and absorbs at about 566 nm.</text>
</comment>
<comment type="similarity">
    <text evidence="3 4">Belongs to the cytochrome b family.</text>
</comment>
<comment type="caution">
    <text evidence="2">The full-length protein contains only eight transmembrane helices, not nine as predicted by bioinformatics tools.</text>
</comment>
<keyword id="KW-0249">Electron transport</keyword>
<keyword id="KW-0349">Heme</keyword>
<keyword id="KW-0408">Iron</keyword>
<keyword id="KW-0472">Membrane</keyword>
<keyword id="KW-0479">Metal-binding</keyword>
<keyword id="KW-0496">Mitochondrion</keyword>
<keyword id="KW-0999">Mitochondrion inner membrane</keyword>
<keyword id="KW-0679">Respiratory chain</keyword>
<keyword id="KW-0812">Transmembrane</keyword>
<keyword id="KW-1133">Transmembrane helix</keyword>
<keyword id="KW-0813">Transport</keyword>
<keyword id="KW-0830">Ubiquinone</keyword>
<feature type="chain" id="PRO_0000254738" description="Cytochrome b">
    <location>
        <begin position="1"/>
        <end position="379"/>
    </location>
</feature>
<feature type="transmembrane region" description="Helical" evidence="2">
    <location>
        <begin position="33"/>
        <end position="53"/>
    </location>
</feature>
<feature type="transmembrane region" description="Helical" evidence="2">
    <location>
        <begin position="77"/>
        <end position="98"/>
    </location>
</feature>
<feature type="transmembrane region" description="Helical" evidence="2">
    <location>
        <begin position="113"/>
        <end position="133"/>
    </location>
</feature>
<feature type="transmembrane region" description="Helical" evidence="2">
    <location>
        <begin position="178"/>
        <end position="198"/>
    </location>
</feature>
<feature type="transmembrane region" description="Helical" evidence="2">
    <location>
        <begin position="226"/>
        <end position="246"/>
    </location>
</feature>
<feature type="transmembrane region" description="Helical" evidence="2">
    <location>
        <begin position="288"/>
        <end position="308"/>
    </location>
</feature>
<feature type="transmembrane region" description="Helical" evidence="2">
    <location>
        <begin position="320"/>
        <end position="340"/>
    </location>
</feature>
<feature type="transmembrane region" description="Helical" evidence="2">
    <location>
        <begin position="347"/>
        <end position="367"/>
    </location>
</feature>
<feature type="binding site" description="axial binding residue" evidence="2">
    <location>
        <position position="83"/>
    </location>
    <ligand>
        <name>heme b</name>
        <dbReference type="ChEBI" id="CHEBI:60344"/>
        <label>b562</label>
    </ligand>
    <ligandPart>
        <name>Fe</name>
        <dbReference type="ChEBI" id="CHEBI:18248"/>
    </ligandPart>
</feature>
<feature type="binding site" description="axial binding residue" evidence="2">
    <location>
        <position position="97"/>
    </location>
    <ligand>
        <name>heme b</name>
        <dbReference type="ChEBI" id="CHEBI:60344"/>
        <label>b566</label>
    </ligand>
    <ligandPart>
        <name>Fe</name>
        <dbReference type="ChEBI" id="CHEBI:18248"/>
    </ligandPart>
</feature>
<feature type="binding site" description="axial binding residue" evidence="2">
    <location>
        <position position="182"/>
    </location>
    <ligand>
        <name>heme b</name>
        <dbReference type="ChEBI" id="CHEBI:60344"/>
        <label>b562</label>
    </ligand>
    <ligandPart>
        <name>Fe</name>
        <dbReference type="ChEBI" id="CHEBI:18248"/>
    </ligandPart>
</feature>
<feature type="binding site" description="axial binding residue" evidence="2">
    <location>
        <position position="196"/>
    </location>
    <ligand>
        <name>heme b</name>
        <dbReference type="ChEBI" id="CHEBI:60344"/>
        <label>b566</label>
    </ligand>
    <ligandPart>
        <name>Fe</name>
        <dbReference type="ChEBI" id="CHEBI:18248"/>
    </ligandPart>
</feature>
<feature type="binding site" evidence="2">
    <location>
        <position position="201"/>
    </location>
    <ligand>
        <name>a ubiquinone</name>
        <dbReference type="ChEBI" id="CHEBI:16389"/>
    </ligand>
</feature>
<gene>
    <name type="primary">MT-CYB</name>
    <name type="synonym">COB</name>
    <name type="synonym">CYTB</name>
    <name type="synonym">MTCYB</name>
</gene>
<proteinExistence type="inferred from homology"/>
<reference key="1">
    <citation type="journal article" date="2005" name="Mol. Phylogenet. Evol.">
        <title>Molecular phylogeny of funnel-eared bats (Chiroptera: Natalidae), with notes on biogeography and conservation.</title>
        <authorList>
            <person name="Davalos L.M."/>
        </authorList>
    </citation>
    <scope>NUCLEOTIDE SEQUENCE [GENOMIC DNA]</scope>
</reference>
<organism>
    <name type="scientific">Natalus major</name>
    <name type="common">Hispaniolan funnel-eared bat</name>
    <dbReference type="NCBI Taxonomy" id="290562"/>
    <lineage>
        <taxon>Eukaryota</taxon>
        <taxon>Metazoa</taxon>
        <taxon>Chordata</taxon>
        <taxon>Craniata</taxon>
        <taxon>Vertebrata</taxon>
        <taxon>Euteleostomi</taxon>
        <taxon>Mammalia</taxon>
        <taxon>Eutheria</taxon>
        <taxon>Laurasiatheria</taxon>
        <taxon>Chiroptera</taxon>
        <taxon>Yangochiroptera</taxon>
        <taxon>Natalidae</taxon>
        <taxon>Natalus</taxon>
    </lineage>
</organism>